<sequence>MQSIKRTLLLLGALLPAALAAPAREPHPSSNIIPGKYIITFKSGIDTAAIESHTAWASNIHKRNLERRGLVGGEFPAGIERKFKIKDFAAYAGSFDPATIEEIRNSEDVAHVEEDQIWYLDALTTQSGAPWGLGSISHKGQASTNYVYDTSAGAGTYAYVVDSGINVDHIEFQGRATKAYNAVGGDHVDTLGHGTHVAGTIGGKTYGVAKQTNLLSVKVFEGRTGSTSVILDGFNWAANDIVSKGRKGKAAINMSLGGGYSYAFNNAVESAYEQGVLSVVAAGNEGVDASNSSPASAPNALTVGATNKSNARASFSNYGKVLDIFAPGQDILSAWIGSTTATNTISGTSMATPHVVGLAVYLMGLEGVSGPAAVTQRILQLATSGVISDVKGSPNKLAYNGAA</sequence>
<protein>
    <recommendedName>
        <fullName>Alkaline protease 1</fullName>
        <shortName>ALP</shortName>
        <ecNumber>3.4.21.63</ecNumber>
    </recommendedName>
    <alternativeName>
        <fullName>Aspergillopeptidase B</fullName>
    </alternativeName>
    <alternativeName>
        <fullName>Aspergillus proteinase B</fullName>
    </alternativeName>
    <alternativeName>
        <fullName>Elastase</fullName>
    </alternativeName>
    <alternativeName>
        <fullName>Elastinolytic serine proteinase</fullName>
    </alternativeName>
    <alternativeName>
        <fullName>Oryzin</fullName>
    </alternativeName>
</protein>
<proteinExistence type="inferred from homology"/>
<gene>
    <name type="primary">alp1</name>
    <name type="synonym">alk1</name>
    <name type="synonym">alp</name>
    <name type="ORF">ACLA_050840</name>
</gene>
<dbReference type="EC" id="3.4.21.63"/>
<dbReference type="EMBL" id="DS027054">
    <property type="protein sequence ID" value="EAW10612.1"/>
    <property type="molecule type" value="Genomic_DNA"/>
</dbReference>
<dbReference type="RefSeq" id="XP_001272038.1">
    <property type="nucleotide sequence ID" value="XM_001272037.1"/>
</dbReference>
<dbReference type="SMR" id="A1CIA7"/>
<dbReference type="STRING" id="344612.A1CIA7"/>
<dbReference type="MEROPS" id="S08.053"/>
<dbReference type="GlyCosmos" id="A1CIA7">
    <property type="glycosylation" value="2 sites, No reported glycans"/>
</dbReference>
<dbReference type="EnsemblFungi" id="EAW10612">
    <property type="protein sequence ID" value="EAW10612"/>
    <property type="gene ID" value="ACLA_050840"/>
</dbReference>
<dbReference type="GeneID" id="4703741"/>
<dbReference type="KEGG" id="act:ACLA_050840"/>
<dbReference type="VEuPathDB" id="FungiDB:ACLA_050840"/>
<dbReference type="eggNOG" id="KOG1153">
    <property type="taxonomic scope" value="Eukaryota"/>
</dbReference>
<dbReference type="HOGENOM" id="CLU_011263_1_4_1"/>
<dbReference type="OMA" id="KYGFHGY"/>
<dbReference type="OrthoDB" id="206201at2759"/>
<dbReference type="BRENDA" id="3.4.21.63">
    <property type="organism ID" value="502"/>
</dbReference>
<dbReference type="Proteomes" id="UP000006701">
    <property type="component" value="Unassembled WGS sequence"/>
</dbReference>
<dbReference type="GO" id="GO:0005576">
    <property type="term" value="C:extracellular region"/>
    <property type="evidence" value="ECO:0007669"/>
    <property type="project" value="UniProtKB-SubCell"/>
</dbReference>
<dbReference type="GO" id="GO:0004252">
    <property type="term" value="F:serine-type endopeptidase activity"/>
    <property type="evidence" value="ECO:0007669"/>
    <property type="project" value="InterPro"/>
</dbReference>
<dbReference type="GO" id="GO:0006508">
    <property type="term" value="P:proteolysis"/>
    <property type="evidence" value="ECO:0007669"/>
    <property type="project" value="UniProtKB-KW"/>
</dbReference>
<dbReference type="CDD" id="cd04077">
    <property type="entry name" value="Peptidases_S8_PCSK9_ProteinaseK_like"/>
    <property type="match status" value="1"/>
</dbReference>
<dbReference type="FunFam" id="3.30.70.80:FF:000008">
    <property type="entry name" value="Alkaline protease 1"/>
    <property type="match status" value="1"/>
</dbReference>
<dbReference type="FunFam" id="3.40.50.200:FF:000014">
    <property type="entry name" value="Proteinase K"/>
    <property type="match status" value="1"/>
</dbReference>
<dbReference type="Gene3D" id="3.30.70.80">
    <property type="entry name" value="Peptidase S8 propeptide/proteinase inhibitor I9"/>
    <property type="match status" value="1"/>
</dbReference>
<dbReference type="Gene3D" id="3.40.50.200">
    <property type="entry name" value="Peptidase S8/S53 domain"/>
    <property type="match status" value="1"/>
</dbReference>
<dbReference type="InterPro" id="IPR034193">
    <property type="entry name" value="PCSK9_ProteinaseK-like"/>
</dbReference>
<dbReference type="InterPro" id="IPR000209">
    <property type="entry name" value="Peptidase_S8/S53_dom"/>
</dbReference>
<dbReference type="InterPro" id="IPR036852">
    <property type="entry name" value="Peptidase_S8/S53_dom_sf"/>
</dbReference>
<dbReference type="InterPro" id="IPR023827">
    <property type="entry name" value="Peptidase_S8_Asp-AS"/>
</dbReference>
<dbReference type="InterPro" id="IPR022398">
    <property type="entry name" value="Peptidase_S8_His-AS"/>
</dbReference>
<dbReference type="InterPro" id="IPR023828">
    <property type="entry name" value="Peptidase_S8_Ser-AS"/>
</dbReference>
<dbReference type="InterPro" id="IPR050131">
    <property type="entry name" value="Peptidase_S8_subtilisin-like"/>
</dbReference>
<dbReference type="InterPro" id="IPR015500">
    <property type="entry name" value="Peptidase_S8_subtilisin-rel"/>
</dbReference>
<dbReference type="InterPro" id="IPR010259">
    <property type="entry name" value="S8pro/Inhibitor_I9"/>
</dbReference>
<dbReference type="InterPro" id="IPR037045">
    <property type="entry name" value="S8pro/Inhibitor_I9_sf"/>
</dbReference>
<dbReference type="PANTHER" id="PTHR43806:SF58">
    <property type="entry name" value="ALKALINE PROTEASE 1-RELATED"/>
    <property type="match status" value="1"/>
</dbReference>
<dbReference type="PANTHER" id="PTHR43806">
    <property type="entry name" value="PEPTIDASE S8"/>
    <property type="match status" value="1"/>
</dbReference>
<dbReference type="Pfam" id="PF05922">
    <property type="entry name" value="Inhibitor_I9"/>
    <property type="match status" value="1"/>
</dbReference>
<dbReference type="Pfam" id="PF00082">
    <property type="entry name" value="Peptidase_S8"/>
    <property type="match status" value="1"/>
</dbReference>
<dbReference type="PRINTS" id="PR00723">
    <property type="entry name" value="SUBTILISIN"/>
</dbReference>
<dbReference type="SUPFAM" id="SSF54897">
    <property type="entry name" value="Protease propeptides/inhibitors"/>
    <property type="match status" value="1"/>
</dbReference>
<dbReference type="SUPFAM" id="SSF52743">
    <property type="entry name" value="Subtilisin-like"/>
    <property type="match status" value="1"/>
</dbReference>
<dbReference type="PROSITE" id="PS51892">
    <property type="entry name" value="SUBTILASE"/>
    <property type="match status" value="1"/>
</dbReference>
<dbReference type="PROSITE" id="PS00136">
    <property type="entry name" value="SUBTILASE_ASP"/>
    <property type="match status" value="1"/>
</dbReference>
<dbReference type="PROSITE" id="PS00137">
    <property type="entry name" value="SUBTILASE_HIS"/>
    <property type="match status" value="1"/>
</dbReference>
<dbReference type="PROSITE" id="PS00138">
    <property type="entry name" value="SUBTILASE_SER"/>
    <property type="match status" value="1"/>
</dbReference>
<keyword id="KW-0325">Glycoprotein</keyword>
<keyword id="KW-0378">Hydrolase</keyword>
<keyword id="KW-0645">Protease</keyword>
<keyword id="KW-1185">Reference proteome</keyword>
<keyword id="KW-0964">Secreted</keyword>
<keyword id="KW-0720">Serine protease</keyword>
<keyword id="KW-0732">Signal</keyword>
<keyword id="KW-0865">Zymogen</keyword>
<name>ORYZ_ASPCL</name>
<reference key="1">
    <citation type="journal article" date="2008" name="PLoS Genet.">
        <title>Genomic islands in the pathogenic filamentous fungus Aspergillus fumigatus.</title>
        <authorList>
            <person name="Fedorova N.D."/>
            <person name="Khaldi N."/>
            <person name="Joardar V.S."/>
            <person name="Maiti R."/>
            <person name="Amedeo P."/>
            <person name="Anderson M.J."/>
            <person name="Crabtree J."/>
            <person name="Silva J.C."/>
            <person name="Badger J.H."/>
            <person name="Albarraq A."/>
            <person name="Angiuoli S."/>
            <person name="Bussey H."/>
            <person name="Bowyer P."/>
            <person name="Cotty P.J."/>
            <person name="Dyer P.S."/>
            <person name="Egan A."/>
            <person name="Galens K."/>
            <person name="Fraser-Liggett C.M."/>
            <person name="Haas B.J."/>
            <person name="Inman J.M."/>
            <person name="Kent R."/>
            <person name="Lemieux S."/>
            <person name="Malavazi I."/>
            <person name="Orvis J."/>
            <person name="Roemer T."/>
            <person name="Ronning C.M."/>
            <person name="Sundaram J.P."/>
            <person name="Sutton G."/>
            <person name="Turner G."/>
            <person name="Venter J.C."/>
            <person name="White O.R."/>
            <person name="Whitty B.R."/>
            <person name="Youngman P."/>
            <person name="Wolfe K.H."/>
            <person name="Goldman G.H."/>
            <person name="Wortman J.R."/>
            <person name="Jiang B."/>
            <person name="Denning D.W."/>
            <person name="Nierman W.C."/>
        </authorList>
    </citation>
    <scope>NUCLEOTIDE SEQUENCE [LARGE SCALE GENOMIC DNA]</scope>
    <source>
        <strain>ATCC 1007 / CBS 513.65 / DSM 816 / NCTC 3887 / NRRL 1 / QM 1276 / 107</strain>
    </source>
</reference>
<comment type="function">
    <text evidence="1">Secreted alkaline protease that allows assimilation of proteinaceous substrates.</text>
</comment>
<comment type="catalytic activity">
    <reaction>
        <text>Hydrolysis of proteins with broad specificity, and of Bz-Arg-OEt &gt; Ac-Tyr-OEt. Does not hydrolyze peptide amides.</text>
        <dbReference type="EC" id="3.4.21.63"/>
    </reaction>
</comment>
<comment type="subcellular location">
    <subcellularLocation>
        <location evidence="1">Secreted</location>
    </subcellularLocation>
</comment>
<comment type="similarity">
    <text evidence="4">Belongs to the peptidase S8 family.</text>
</comment>
<evidence type="ECO:0000250" key="1"/>
<evidence type="ECO:0000255" key="2"/>
<evidence type="ECO:0000255" key="3">
    <source>
        <dbReference type="PROSITE-ProRule" id="PRU01240"/>
    </source>
</evidence>
<evidence type="ECO:0000305" key="4"/>
<feature type="signal peptide" evidence="2">
    <location>
        <begin position="1"/>
        <end position="21"/>
    </location>
</feature>
<feature type="propeptide" id="PRO_0000406992" evidence="1">
    <location>
        <begin position="22"/>
        <end position="125"/>
    </location>
</feature>
<feature type="chain" id="PRO_0000406993" description="Alkaline protease 1">
    <location>
        <begin position="126"/>
        <end position="403"/>
    </location>
</feature>
<feature type="domain" description="Inhibitor I9" evidence="2">
    <location>
        <begin position="36"/>
        <end position="120"/>
    </location>
</feature>
<feature type="domain" description="Peptidase S8" evidence="3">
    <location>
        <begin position="130"/>
        <end position="403"/>
    </location>
</feature>
<feature type="active site" description="Charge relay system" evidence="3">
    <location>
        <position position="162"/>
    </location>
</feature>
<feature type="active site" description="Charge relay system" evidence="3">
    <location>
        <position position="193"/>
    </location>
</feature>
<feature type="active site" description="Charge relay system" evidence="3">
    <location>
        <position position="349"/>
    </location>
</feature>
<feature type="glycosylation site" description="N-linked (GlcNAc...) asparagine" evidence="2">
    <location>
        <position position="253"/>
    </location>
</feature>
<feature type="glycosylation site" description="N-linked (GlcNAc...) asparagine" evidence="2">
    <location>
        <position position="307"/>
    </location>
</feature>
<organism>
    <name type="scientific">Aspergillus clavatus (strain ATCC 1007 / CBS 513.65 / DSM 816 / NCTC 3887 / NRRL 1 / QM 1276 / 107)</name>
    <dbReference type="NCBI Taxonomy" id="344612"/>
    <lineage>
        <taxon>Eukaryota</taxon>
        <taxon>Fungi</taxon>
        <taxon>Dikarya</taxon>
        <taxon>Ascomycota</taxon>
        <taxon>Pezizomycotina</taxon>
        <taxon>Eurotiomycetes</taxon>
        <taxon>Eurotiomycetidae</taxon>
        <taxon>Eurotiales</taxon>
        <taxon>Aspergillaceae</taxon>
        <taxon>Aspergillus</taxon>
        <taxon>Aspergillus subgen. Fumigati</taxon>
    </lineage>
</organism>
<accession>A1CIA7</accession>